<organism>
    <name type="scientific">Leptosphaeria maculans (strain JN3 / isolate v23.1.3 / race Av1-4-5-6-7-8)</name>
    <name type="common">Blackleg fungus</name>
    <name type="synonym">Phoma lingam</name>
    <dbReference type="NCBI Taxonomy" id="985895"/>
    <lineage>
        <taxon>Eukaryota</taxon>
        <taxon>Fungi</taxon>
        <taxon>Dikarya</taxon>
        <taxon>Ascomycota</taxon>
        <taxon>Pezizomycotina</taxon>
        <taxon>Dothideomycetes</taxon>
        <taxon>Pleosporomycetidae</taxon>
        <taxon>Pleosporales</taxon>
        <taxon>Pleosporineae</taxon>
        <taxon>Leptosphaeriaceae</taxon>
        <taxon>Plenodomus</taxon>
        <taxon>Plenodomus lingam/Leptosphaeria maculans species complex</taxon>
    </lineage>
</organism>
<gene>
    <name evidence="3" type="primary">C6TF</name>
    <name type="ORF">LEMA_P002650</name>
</gene>
<protein>
    <recommendedName>
        <fullName evidence="3">Phomenoic acid biosynthesis cluster-specific transcriptional regulator</fullName>
    </recommendedName>
</protein>
<evidence type="ECO:0000255" key="1">
    <source>
        <dbReference type="PROSITE-ProRule" id="PRU00227"/>
    </source>
</evidence>
<evidence type="ECO:0000269" key="2">
    <source>
    </source>
</evidence>
<evidence type="ECO:0000303" key="3">
    <source>
    </source>
</evidence>
<evidence type="ECO:0000305" key="4">
    <source>
    </source>
</evidence>
<sequence>MHMQFQLPGRRRRHRTTWIEWVLVHKSARSGGELKAVMEDSDRKRHCWQCRRSCVVCDFTQPGCQRCSAAGVSCPGYSDIEPRKLKWLAPGKVLSRNHKANKAHLVRKSTTIATASAQAVEPKISDWNMRYNACILEDLTPIHELGRHPYIHHVSPERLKEAILVPEFLRSGLICMTLNHRMNRLGIRSNPGATDLVEKYYIHWGITIRSLSEQFNVENKRTSDVVIAGILTILLGDIQNGAQVSWLHHLDGIHKLVSLRGGFRALAPSQRLAPLLNCLWFIGIITNTTCPASYLNLSTISHFEASDFMQEHYSFASTPTQMFPPQLLAEVSKINYLRLQAKSKKEYRDEHLSKDAYNILESIEAFSPEESAQSKFSSKEDWMRIGTVYRSATALYCILSLQSVSVLPEDSALRTRCVIHGQVLLRHLPESLSSARTKRFMLWPLVLLGVEAVHSDMATRAFVSKQLPELSRSVGTSIPLTAQSVLESFWASGLKLWDACFDRPYPFTMQIAVDVSQVSTP</sequence>
<name>C6TF_LEPMJ</name>
<comment type="function">
    <text evidence="2">Transcriptional regulator; part of the gene cluster that mediates the biosynthesis of phomenoic acid, a long chain aliphatic carboxylic acid that does not appear to be essential for pathogenicity but may play a role in allowing to outcompete other fungi in the environmental niche via its antifungal properties (PubMed:23396262). Positively regulates the expression of the cluster and subsequent production of phomenoic acid (PubMed:23396262).</text>
</comment>
<comment type="subcellular location">
    <subcellularLocation>
        <location evidence="4">Nucleus</location>
    </subcellularLocation>
</comment>
<comment type="disruption phenotype">
    <text evidence="2">Leads to reduced expression of genes for the polyketide synthase PKS2, the cytochrome P450 monooxygenase P450, the alcohol dehydrogenase/quinone reductase YogA, the lipid transport exporter superfamily member RTA1 and the a major facilitator superfamily transporter MFS, as well as a marked reduction in phomenoic acid production.</text>
</comment>
<reference key="1">
    <citation type="journal article" date="2011" name="Nat. Commun.">
        <title>Effector diversification within compartments of the Leptosphaeria maculans genome affected by Repeat-Induced Point mutations.</title>
        <authorList>
            <person name="Rouxel T."/>
            <person name="Grandaubert J."/>
            <person name="Hane J.K."/>
            <person name="Hoede C."/>
            <person name="van de Wouw A.P."/>
            <person name="Couloux A."/>
            <person name="Dominguez V."/>
            <person name="Anthouard V."/>
            <person name="Bally P."/>
            <person name="Bourras S."/>
            <person name="Cozijnsen A.J."/>
            <person name="Ciuffetti L.M."/>
            <person name="Degrave A."/>
            <person name="Dilmaghani A."/>
            <person name="Duret L."/>
            <person name="Fudal I."/>
            <person name="Goodwin S.B."/>
            <person name="Gout L."/>
            <person name="Glaser N."/>
            <person name="Linglin J."/>
            <person name="Kema G.H.J."/>
            <person name="Lapalu N."/>
            <person name="Lawrence C.B."/>
            <person name="May K."/>
            <person name="Meyer M."/>
            <person name="Ollivier B."/>
            <person name="Poulain J."/>
            <person name="Schoch C.L."/>
            <person name="Simon A."/>
            <person name="Spatafora J.W."/>
            <person name="Stachowiak A."/>
            <person name="Turgeon B.G."/>
            <person name="Tyler B.M."/>
            <person name="Vincent D."/>
            <person name="Weissenbach J."/>
            <person name="Amselem J."/>
            <person name="Quesneville H."/>
            <person name="Oliver R.P."/>
            <person name="Wincker P."/>
            <person name="Balesdent M.-H."/>
            <person name="Howlett B.J."/>
        </authorList>
    </citation>
    <scope>NUCLEOTIDE SEQUENCE [LARGE SCALE GENOMIC DNA]</scope>
    <source>
        <strain>JN3 / isolate v23.1.3 / race Av1-4-5-6-7-8</strain>
    </source>
</reference>
<reference key="2">
    <citation type="journal article" date="2013" name="Fungal Genet. Biol.">
        <title>A gene cluster responsible for biosynthesis of phomenoic acid in the plant pathogenic fungus, Leptosphaeria maculans.</title>
        <authorList>
            <person name="Elliott C.E."/>
            <person name="Callahan D.L."/>
            <person name="Schwenk D."/>
            <person name="Nett M."/>
            <person name="Hoffmeister D."/>
            <person name="Howlett B.J."/>
        </authorList>
    </citation>
    <scope>IDENTIFICATION</scope>
    <scope>DISRUPTION PHENOTYPE</scope>
    <scope>FUNCTION</scope>
</reference>
<accession>E5AE39</accession>
<keyword id="KW-0238">DNA-binding</keyword>
<keyword id="KW-0539">Nucleus</keyword>
<keyword id="KW-1185">Reference proteome</keyword>
<keyword id="KW-0804">Transcription</keyword>
<keyword id="KW-0805">Transcription regulation</keyword>
<keyword id="KW-0862">Zinc</keyword>
<dbReference type="EMBL" id="FP929139">
    <property type="protein sequence ID" value="CBY01478.1"/>
    <property type="molecule type" value="Genomic_DNA"/>
</dbReference>
<dbReference type="RefSeq" id="XP_003844957.1">
    <property type="nucleotide sequence ID" value="XM_003844909.1"/>
</dbReference>
<dbReference type="STRING" id="985895.E5AE39"/>
<dbReference type="EnsemblFungi" id="CBY01478">
    <property type="protein sequence ID" value="CBY01478"/>
    <property type="gene ID" value="LEMA_P002650.1"/>
</dbReference>
<dbReference type="VEuPathDB" id="FungiDB:LEMA_P002650.1"/>
<dbReference type="eggNOG" id="ENOG502SM3X">
    <property type="taxonomic scope" value="Eukaryota"/>
</dbReference>
<dbReference type="HOGENOM" id="CLU_021916_2_1_1"/>
<dbReference type="InParanoid" id="E5AE39"/>
<dbReference type="OMA" id="RKRHCWE"/>
<dbReference type="OrthoDB" id="5386330at2759"/>
<dbReference type="Proteomes" id="UP000002668">
    <property type="component" value="Genome"/>
</dbReference>
<dbReference type="GO" id="GO:0005634">
    <property type="term" value="C:nucleus"/>
    <property type="evidence" value="ECO:0007669"/>
    <property type="project" value="UniProtKB-SubCell"/>
</dbReference>
<dbReference type="GO" id="GO:0000981">
    <property type="term" value="F:DNA-binding transcription factor activity, RNA polymerase II-specific"/>
    <property type="evidence" value="ECO:0007669"/>
    <property type="project" value="InterPro"/>
</dbReference>
<dbReference type="GO" id="GO:0000976">
    <property type="term" value="F:transcription cis-regulatory region binding"/>
    <property type="evidence" value="ECO:0007669"/>
    <property type="project" value="TreeGrafter"/>
</dbReference>
<dbReference type="GO" id="GO:0008270">
    <property type="term" value="F:zinc ion binding"/>
    <property type="evidence" value="ECO:0007669"/>
    <property type="project" value="InterPro"/>
</dbReference>
<dbReference type="GO" id="GO:0045944">
    <property type="term" value="P:positive regulation of transcription by RNA polymerase II"/>
    <property type="evidence" value="ECO:0007669"/>
    <property type="project" value="TreeGrafter"/>
</dbReference>
<dbReference type="CDD" id="cd00067">
    <property type="entry name" value="GAL4"/>
    <property type="match status" value="1"/>
</dbReference>
<dbReference type="InterPro" id="IPR021858">
    <property type="entry name" value="Fun_TF"/>
</dbReference>
<dbReference type="InterPro" id="IPR001138">
    <property type="entry name" value="Zn2Cys6_DnaBD"/>
</dbReference>
<dbReference type="PANTHER" id="PTHR37534:SF48">
    <property type="entry name" value="FINGER DOMAIN PROTEIN, PUTATIVE-RELATED"/>
    <property type="match status" value="1"/>
</dbReference>
<dbReference type="PANTHER" id="PTHR37534">
    <property type="entry name" value="TRANSCRIPTIONAL ACTIVATOR PROTEIN UGA3"/>
    <property type="match status" value="1"/>
</dbReference>
<dbReference type="Pfam" id="PF11951">
    <property type="entry name" value="Fungal_trans_2"/>
    <property type="match status" value="1"/>
</dbReference>
<dbReference type="Pfam" id="PF00172">
    <property type="entry name" value="Zn_clus"/>
    <property type="match status" value="1"/>
</dbReference>
<proteinExistence type="predicted"/>
<feature type="chain" id="PRO_0000446536" description="Phomenoic acid biosynthesis cluster-specific transcriptional regulator">
    <location>
        <begin position="1"/>
        <end position="521"/>
    </location>
</feature>
<feature type="DNA-binding region" description="Zn(2)-C6 fungal-type" evidence="1">
    <location>
        <begin position="46"/>
        <end position="76"/>
    </location>
</feature>